<reference key="1">
    <citation type="submission" date="2008-06" db="EMBL/GenBank/DDBJ databases">
        <title>Complete sequence of Stenotrophomonas maltophilia R551-3.</title>
        <authorList>
            <consortium name="US DOE Joint Genome Institute"/>
            <person name="Lucas S."/>
            <person name="Copeland A."/>
            <person name="Lapidus A."/>
            <person name="Glavina del Rio T."/>
            <person name="Dalin E."/>
            <person name="Tice H."/>
            <person name="Pitluck S."/>
            <person name="Chain P."/>
            <person name="Malfatti S."/>
            <person name="Shin M."/>
            <person name="Vergez L."/>
            <person name="Lang D."/>
            <person name="Schmutz J."/>
            <person name="Larimer F."/>
            <person name="Land M."/>
            <person name="Hauser L."/>
            <person name="Kyrpides N."/>
            <person name="Mikhailova N."/>
            <person name="Taghavi S."/>
            <person name="Monchy S."/>
            <person name="Newman L."/>
            <person name="Vangronsveld J."/>
            <person name="van der Lelie D."/>
            <person name="Richardson P."/>
        </authorList>
    </citation>
    <scope>NUCLEOTIDE SEQUENCE [LARGE SCALE GENOMIC DNA]</scope>
    <source>
        <strain>R551-3</strain>
    </source>
</reference>
<accession>B4SQT4</accession>
<protein>
    <recommendedName>
        <fullName evidence="1">NADH-quinone oxidoreductase subunit C</fullName>
        <ecNumber evidence="1">7.1.1.-</ecNumber>
    </recommendedName>
    <alternativeName>
        <fullName evidence="1">NADH dehydrogenase I subunit C</fullName>
    </alternativeName>
    <alternativeName>
        <fullName evidence="1">NDH-1 subunit C</fullName>
    </alternativeName>
</protein>
<evidence type="ECO:0000255" key="1">
    <source>
        <dbReference type="HAMAP-Rule" id="MF_01357"/>
    </source>
</evidence>
<proteinExistence type="inferred from homology"/>
<dbReference type="EC" id="7.1.1.-" evidence="1"/>
<dbReference type="EMBL" id="CP001111">
    <property type="protein sequence ID" value="ACF52529.1"/>
    <property type="molecule type" value="Genomic_DNA"/>
</dbReference>
<dbReference type="RefSeq" id="WP_005410462.1">
    <property type="nucleotide sequence ID" value="NC_011071.1"/>
</dbReference>
<dbReference type="SMR" id="B4SQT4"/>
<dbReference type="STRING" id="391008.Smal_2829"/>
<dbReference type="KEGG" id="smt:Smal_2829"/>
<dbReference type="eggNOG" id="COG0852">
    <property type="taxonomic scope" value="Bacteria"/>
</dbReference>
<dbReference type="HOGENOM" id="CLU_042628_2_1_6"/>
<dbReference type="OrthoDB" id="9803286at2"/>
<dbReference type="Proteomes" id="UP000001867">
    <property type="component" value="Chromosome"/>
</dbReference>
<dbReference type="GO" id="GO:0005886">
    <property type="term" value="C:plasma membrane"/>
    <property type="evidence" value="ECO:0007669"/>
    <property type="project" value="UniProtKB-SubCell"/>
</dbReference>
<dbReference type="GO" id="GO:0008137">
    <property type="term" value="F:NADH dehydrogenase (ubiquinone) activity"/>
    <property type="evidence" value="ECO:0007669"/>
    <property type="project" value="InterPro"/>
</dbReference>
<dbReference type="GO" id="GO:0050136">
    <property type="term" value="F:NADH:ubiquinone reductase (non-electrogenic) activity"/>
    <property type="evidence" value="ECO:0007669"/>
    <property type="project" value="UniProtKB-UniRule"/>
</dbReference>
<dbReference type="GO" id="GO:0048038">
    <property type="term" value="F:quinone binding"/>
    <property type="evidence" value="ECO:0007669"/>
    <property type="project" value="UniProtKB-KW"/>
</dbReference>
<dbReference type="Gene3D" id="3.30.460.80">
    <property type="entry name" value="NADH:ubiquinone oxidoreductase, 30kDa subunit"/>
    <property type="match status" value="1"/>
</dbReference>
<dbReference type="HAMAP" id="MF_01357">
    <property type="entry name" value="NDH1_NuoC"/>
    <property type="match status" value="1"/>
</dbReference>
<dbReference type="InterPro" id="IPR010218">
    <property type="entry name" value="NADH_DH_suC"/>
</dbReference>
<dbReference type="InterPro" id="IPR037232">
    <property type="entry name" value="NADH_quin_OxRdtase_su_C/D-like"/>
</dbReference>
<dbReference type="InterPro" id="IPR001268">
    <property type="entry name" value="NADH_UbQ_OxRdtase_30kDa_su"/>
</dbReference>
<dbReference type="InterPro" id="IPR020396">
    <property type="entry name" value="NADH_UbQ_OxRdtase_CS"/>
</dbReference>
<dbReference type="NCBIfam" id="NF004730">
    <property type="entry name" value="PRK06074.1-1"/>
    <property type="match status" value="1"/>
</dbReference>
<dbReference type="NCBIfam" id="NF004732">
    <property type="entry name" value="PRK06074.1-4"/>
    <property type="match status" value="1"/>
</dbReference>
<dbReference type="PANTHER" id="PTHR10884:SF14">
    <property type="entry name" value="NADH DEHYDROGENASE [UBIQUINONE] IRON-SULFUR PROTEIN 3, MITOCHONDRIAL"/>
    <property type="match status" value="1"/>
</dbReference>
<dbReference type="PANTHER" id="PTHR10884">
    <property type="entry name" value="NADH DEHYDROGENASE UBIQUINONE IRON-SULFUR PROTEIN 3"/>
    <property type="match status" value="1"/>
</dbReference>
<dbReference type="Pfam" id="PF00329">
    <property type="entry name" value="Complex1_30kDa"/>
    <property type="match status" value="1"/>
</dbReference>
<dbReference type="SUPFAM" id="SSF143243">
    <property type="entry name" value="Nqo5-like"/>
    <property type="match status" value="1"/>
</dbReference>
<dbReference type="PROSITE" id="PS00542">
    <property type="entry name" value="COMPLEX1_30K"/>
    <property type="match status" value="1"/>
</dbReference>
<gene>
    <name evidence="1" type="primary">nuoC</name>
    <name type="ordered locus">Smal_2829</name>
</gene>
<sequence length="249" mass="27960">MAEQASFIDRLSARFAGAKVIVVEPRGEVTLEVPAAEWHATALALRDEFGFEQAVDLCGVDYLGYGSDEWDTADVSSQGFSRGVEGKAQGRFAWGEFPTEENGADGARPQHMPTQRFAVVAQLRSYQHNLMMHLRCFAPDEALPVVSSLTGIWPGLNWFEREAFDLYGVIFEGHPDLRRILTDYGFVGHPFRKDFPLIGNVEVRYDEEKKRVIYEPVTSVEPRVGVPRVIRDDARLQTAEGERAQEAVK</sequence>
<feature type="chain" id="PRO_0000358201" description="NADH-quinone oxidoreductase subunit C">
    <location>
        <begin position="1"/>
        <end position="249"/>
    </location>
</feature>
<name>NUOC_STRM5</name>
<keyword id="KW-0997">Cell inner membrane</keyword>
<keyword id="KW-1003">Cell membrane</keyword>
<keyword id="KW-0472">Membrane</keyword>
<keyword id="KW-0520">NAD</keyword>
<keyword id="KW-0874">Quinone</keyword>
<keyword id="KW-1278">Translocase</keyword>
<keyword id="KW-0813">Transport</keyword>
<keyword id="KW-0830">Ubiquinone</keyword>
<organism>
    <name type="scientific">Stenotrophomonas maltophilia (strain R551-3)</name>
    <dbReference type="NCBI Taxonomy" id="391008"/>
    <lineage>
        <taxon>Bacteria</taxon>
        <taxon>Pseudomonadati</taxon>
        <taxon>Pseudomonadota</taxon>
        <taxon>Gammaproteobacteria</taxon>
        <taxon>Lysobacterales</taxon>
        <taxon>Lysobacteraceae</taxon>
        <taxon>Stenotrophomonas</taxon>
        <taxon>Stenotrophomonas maltophilia group</taxon>
    </lineage>
</organism>
<comment type="function">
    <text evidence="1">NDH-1 shuttles electrons from NADH, via FMN and iron-sulfur (Fe-S) centers, to quinones in the respiratory chain. The immediate electron acceptor for the enzyme in this species is believed to be ubiquinone. Couples the redox reaction to proton translocation (for every two electrons transferred, four hydrogen ions are translocated across the cytoplasmic membrane), and thus conserves the redox energy in a proton gradient.</text>
</comment>
<comment type="catalytic activity">
    <reaction evidence="1">
        <text>a quinone + NADH + 5 H(+)(in) = a quinol + NAD(+) + 4 H(+)(out)</text>
        <dbReference type="Rhea" id="RHEA:57888"/>
        <dbReference type="ChEBI" id="CHEBI:15378"/>
        <dbReference type="ChEBI" id="CHEBI:24646"/>
        <dbReference type="ChEBI" id="CHEBI:57540"/>
        <dbReference type="ChEBI" id="CHEBI:57945"/>
        <dbReference type="ChEBI" id="CHEBI:132124"/>
    </reaction>
</comment>
<comment type="subunit">
    <text evidence="1">NDH-1 is composed of 14 different subunits. Subunits NuoB, C, D, E, F, and G constitute the peripheral sector of the complex.</text>
</comment>
<comment type="subcellular location">
    <subcellularLocation>
        <location evidence="1">Cell inner membrane</location>
        <topology evidence="1">Peripheral membrane protein</topology>
        <orientation evidence="1">Cytoplasmic side</orientation>
    </subcellularLocation>
</comment>
<comment type="similarity">
    <text evidence="1">Belongs to the complex I 30 kDa subunit family.</text>
</comment>